<gene>
    <name type="ordered locus">Rv1993c</name>
    <name type="ORF">MTCY39.26</name>
</gene>
<reference key="1">
    <citation type="journal article" date="1998" name="Nature">
        <title>Deciphering the biology of Mycobacterium tuberculosis from the complete genome sequence.</title>
        <authorList>
            <person name="Cole S.T."/>
            <person name="Brosch R."/>
            <person name="Parkhill J."/>
            <person name="Garnier T."/>
            <person name="Churcher C.M."/>
            <person name="Harris D.E."/>
            <person name="Gordon S.V."/>
            <person name="Eiglmeier K."/>
            <person name="Gas S."/>
            <person name="Barry C.E. III"/>
            <person name="Tekaia F."/>
            <person name="Badcock K."/>
            <person name="Basham D."/>
            <person name="Brown D."/>
            <person name="Chillingworth T."/>
            <person name="Connor R."/>
            <person name="Davies R.M."/>
            <person name="Devlin K."/>
            <person name="Feltwell T."/>
            <person name="Gentles S."/>
            <person name="Hamlin N."/>
            <person name="Holroyd S."/>
            <person name="Hornsby T."/>
            <person name="Jagels K."/>
            <person name="Krogh A."/>
            <person name="McLean J."/>
            <person name="Moule S."/>
            <person name="Murphy L.D."/>
            <person name="Oliver S."/>
            <person name="Osborne J."/>
            <person name="Quail M.A."/>
            <person name="Rajandream M.A."/>
            <person name="Rogers J."/>
            <person name="Rutter S."/>
            <person name="Seeger K."/>
            <person name="Skelton S."/>
            <person name="Squares S."/>
            <person name="Squares R."/>
            <person name="Sulston J.E."/>
            <person name="Taylor K."/>
            <person name="Whitehead S."/>
            <person name="Barrell B.G."/>
        </authorList>
    </citation>
    <scope>NUCLEOTIDE SEQUENCE [LARGE SCALE GENOMIC DNA]</scope>
    <source>
        <strain>ATCC 25618 / H37Rv</strain>
    </source>
</reference>
<reference key="2">
    <citation type="journal article" date="2011" name="Mol. Cell. Proteomics">
        <title>Proteogenomic analysis of Mycobacterium tuberculosis by high resolution mass spectrometry.</title>
        <authorList>
            <person name="Kelkar D.S."/>
            <person name="Kumar D."/>
            <person name="Kumar P."/>
            <person name="Balakrishnan L."/>
            <person name="Muthusamy B."/>
            <person name="Yadav A.K."/>
            <person name="Shrivastava P."/>
            <person name="Marimuthu A."/>
            <person name="Anand S."/>
            <person name="Sundaram H."/>
            <person name="Kingsbury R."/>
            <person name="Harsha H.C."/>
            <person name="Nair B."/>
            <person name="Prasad T.S."/>
            <person name="Chauhan D.S."/>
            <person name="Katoch K."/>
            <person name="Katoch V.M."/>
            <person name="Kumar P."/>
            <person name="Chaerkady R."/>
            <person name="Ramachandran S."/>
            <person name="Dash D."/>
            <person name="Pandey A."/>
        </authorList>
    </citation>
    <scope>IDENTIFICATION BY MASS SPECTROMETRY [LARGE SCALE ANALYSIS]</scope>
    <source>
        <strain>ATCC 25618 / H37Rv</strain>
    </source>
</reference>
<keyword id="KW-1185">Reference proteome</keyword>
<organism>
    <name type="scientific">Mycobacterium tuberculosis (strain ATCC 25618 / H37Rv)</name>
    <dbReference type="NCBI Taxonomy" id="83332"/>
    <lineage>
        <taxon>Bacteria</taxon>
        <taxon>Bacillati</taxon>
        <taxon>Actinomycetota</taxon>
        <taxon>Actinomycetes</taxon>
        <taxon>Mycobacteriales</taxon>
        <taxon>Mycobacteriaceae</taxon>
        <taxon>Mycobacterium</taxon>
        <taxon>Mycobacterium tuberculosis complex</taxon>
    </lineage>
</organism>
<feature type="chain" id="PRO_0000103920" description="Uncharacterized protein Rv1993c">
    <location>
        <begin position="1"/>
        <end position="90"/>
    </location>
</feature>
<accession>P9WLP5</accession>
<accession>L0TB14</accession>
<accession>P64913</accession>
<accession>Q10865</accession>
<proteinExistence type="evidence at protein level"/>
<name>Y1993_MYCTU</name>
<sequence>MVTHELLVKAAGAVLTGLVGVSAYETLRKALGTAPIRRASVTVMEWGLRGTRRAEAAAESARLTVADVVAEARGRIGEEAPLPAGARVDE</sequence>
<dbReference type="EMBL" id="AL123456">
    <property type="protein sequence ID" value="CCP44765.1"/>
    <property type="molecule type" value="Genomic_DNA"/>
</dbReference>
<dbReference type="PIR" id="G70757">
    <property type="entry name" value="G70757"/>
</dbReference>
<dbReference type="RefSeq" id="NP_216509.1">
    <property type="nucleotide sequence ID" value="NC_000962.3"/>
</dbReference>
<dbReference type="RefSeq" id="WP_003410017.1">
    <property type="nucleotide sequence ID" value="NZ_NVQJ01000043.1"/>
</dbReference>
<dbReference type="SMR" id="P9WLP5"/>
<dbReference type="STRING" id="83332.Rv1993c"/>
<dbReference type="PaxDb" id="83332-Rv1993c"/>
<dbReference type="DNASU" id="885631"/>
<dbReference type="GeneID" id="885631"/>
<dbReference type="KEGG" id="mtu:Rv1993c"/>
<dbReference type="KEGG" id="mtv:RVBD_1993c"/>
<dbReference type="TubercuList" id="Rv1993c"/>
<dbReference type="eggNOG" id="ENOG5030ARN">
    <property type="taxonomic scope" value="Bacteria"/>
</dbReference>
<dbReference type="InParanoid" id="P9WLP5"/>
<dbReference type="OrthoDB" id="3579065at2"/>
<dbReference type="PhylomeDB" id="P9WLP5"/>
<dbReference type="Proteomes" id="UP000001584">
    <property type="component" value="Chromosome"/>
</dbReference>
<dbReference type="GO" id="GO:0005886">
    <property type="term" value="C:plasma membrane"/>
    <property type="evidence" value="ECO:0007005"/>
    <property type="project" value="MTBBASE"/>
</dbReference>
<dbReference type="InterPro" id="IPR009963">
    <property type="entry name" value="DUF1490"/>
</dbReference>
<dbReference type="Pfam" id="PF07371">
    <property type="entry name" value="DUF1490"/>
    <property type="match status" value="1"/>
</dbReference>
<protein>
    <recommendedName>
        <fullName>Uncharacterized protein Rv1993c</fullName>
    </recommendedName>
</protein>